<evidence type="ECO:0000250" key="1">
    <source>
        <dbReference type="UniProtKB" id="Q84MA2"/>
    </source>
</evidence>
<evidence type="ECO:0000269" key="2">
    <source>
    </source>
</evidence>
<evidence type="ECO:0000303" key="3">
    <source>
    </source>
</evidence>
<evidence type="ECO:0000305" key="4"/>
<evidence type="ECO:0000312" key="5">
    <source>
        <dbReference type="Araport" id="AT2G01900"/>
    </source>
</evidence>
<evidence type="ECO:0000312" key="6">
    <source>
        <dbReference type="EMBL" id="AAD21781.1"/>
    </source>
</evidence>
<dbReference type="EC" id="3.1.3.36" evidence="2"/>
<dbReference type="EC" id="3.1.3.86" evidence="2"/>
<dbReference type="EMBL" id="AC007069">
    <property type="protein sequence ID" value="AAD21781.1"/>
    <property type="molecule type" value="Genomic_DNA"/>
</dbReference>
<dbReference type="EMBL" id="CP002685">
    <property type="protein sequence ID" value="AEC05514.1"/>
    <property type="molecule type" value="Genomic_DNA"/>
</dbReference>
<dbReference type="EMBL" id="BX818920">
    <property type="status" value="NOT_ANNOTATED_CDS"/>
    <property type="molecule type" value="mRNA"/>
</dbReference>
<dbReference type="PIR" id="E84430">
    <property type="entry name" value="E84430"/>
</dbReference>
<dbReference type="RefSeq" id="NP_178299.1">
    <property type="nucleotide sequence ID" value="NM_126251.3"/>
</dbReference>
<dbReference type="SMR" id="Q9SIS4"/>
<dbReference type="FunCoup" id="Q9SIS4">
    <property type="interactions" value="2595"/>
</dbReference>
<dbReference type="STRING" id="3702.Q9SIS4"/>
<dbReference type="PaxDb" id="3702-AT2G01900.1"/>
<dbReference type="EnsemblPlants" id="AT2G01900.1">
    <property type="protein sequence ID" value="AT2G01900.1"/>
    <property type="gene ID" value="AT2G01900"/>
</dbReference>
<dbReference type="GeneID" id="814721"/>
<dbReference type="Gramene" id="AT2G01900.1">
    <property type="protein sequence ID" value="AT2G01900.1"/>
    <property type="gene ID" value="AT2G01900"/>
</dbReference>
<dbReference type="KEGG" id="ath:AT2G01900"/>
<dbReference type="Araport" id="AT2G01900"/>
<dbReference type="TAIR" id="AT2G01900">
    <property type="gene designation" value="T5PTASE9"/>
</dbReference>
<dbReference type="eggNOG" id="KOG0565">
    <property type="taxonomic scope" value="Eukaryota"/>
</dbReference>
<dbReference type="HOGENOM" id="CLU_011711_1_0_1"/>
<dbReference type="InParanoid" id="Q9SIS4"/>
<dbReference type="OMA" id="VACCHLA"/>
<dbReference type="OrthoDB" id="62798at2759"/>
<dbReference type="PhylomeDB" id="Q9SIS4"/>
<dbReference type="PRO" id="PR:Q9SIS4"/>
<dbReference type="Proteomes" id="UP000006548">
    <property type="component" value="Chromosome 2"/>
</dbReference>
<dbReference type="ExpressionAtlas" id="Q9SIS4">
    <property type="expression patterns" value="baseline and differential"/>
</dbReference>
<dbReference type="GO" id="GO:0004445">
    <property type="term" value="F:inositol-polyphosphate 5-phosphatase activity"/>
    <property type="evidence" value="ECO:0007669"/>
    <property type="project" value="InterPro"/>
</dbReference>
<dbReference type="GO" id="GO:0034595">
    <property type="term" value="F:phosphatidylinositol phosphate 5-phosphatase activity"/>
    <property type="evidence" value="ECO:0000314"/>
    <property type="project" value="TAIR"/>
</dbReference>
<dbReference type="GO" id="GO:0034485">
    <property type="term" value="F:phosphatidylinositol-3,4,5-trisphosphate 5-phosphatase activity"/>
    <property type="evidence" value="ECO:0000314"/>
    <property type="project" value="UniProtKB"/>
</dbReference>
<dbReference type="GO" id="GO:0004439">
    <property type="term" value="F:phosphatidylinositol-4,5-bisphosphate 5-phosphatase activity"/>
    <property type="evidence" value="ECO:0000314"/>
    <property type="project" value="UniProtKB"/>
</dbReference>
<dbReference type="GO" id="GO:0071472">
    <property type="term" value="P:cellular response to salt stress"/>
    <property type="evidence" value="ECO:0000315"/>
    <property type="project" value="TAIR"/>
</dbReference>
<dbReference type="GO" id="GO:0046856">
    <property type="term" value="P:phosphatidylinositol dephosphorylation"/>
    <property type="evidence" value="ECO:0000314"/>
    <property type="project" value="UniProtKB"/>
</dbReference>
<dbReference type="GO" id="GO:2000369">
    <property type="term" value="P:regulation of clathrin-dependent endocytosis"/>
    <property type="evidence" value="ECO:0000315"/>
    <property type="project" value="TAIR"/>
</dbReference>
<dbReference type="GO" id="GO:2000377">
    <property type="term" value="P:regulation of reactive oxygen species metabolic process"/>
    <property type="evidence" value="ECO:0000315"/>
    <property type="project" value="UniProtKB"/>
</dbReference>
<dbReference type="FunFam" id="3.60.10.10:FF:000053">
    <property type="entry name" value="Type IV inositol polyphosphate 5-phosphatase 9"/>
    <property type="match status" value="1"/>
</dbReference>
<dbReference type="Gene3D" id="3.60.10.10">
    <property type="entry name" value="Endonuclease/exonuclease/phosphatase"/>
    <property type="match status" value="1"/>
</dbReference>
<dbReference type="InterPro" id="IPR036691">
    <property type="entry name" value="Endo/exonu/phosph_ase_sf"/>
</dbReference>
<dbReference type="InterPro" id="IPR045849">
    <property type="entry name" value="IP5P_plant"/>
</dbReference>
<dbReference type="InterPro" id="IPR000300">
    <property type="entry name" value="IPPc"/>
</dbReference>
<dbReference type="PANTHER" id="PTHR45666">
    <property type="entry name" value="TYPE IV INOSITOL POLYPHOSPHATE 5-PHOSPHATASE 9"/>
    <property type="match status" value="1"/>
</dbReference>
<dbReference type="PANTHER" id="PTHR45666:SF18">
    <property type="entry name" value="TYPE IV INOSITOL POLYPHOSPHATE 5-PHOSPHATASE 9"/>
    <property type="match status" value="1"/>
</dbReference>
<dbReference type="Pfam" id="PF22669">
    <property type="entry name" value="Exo_endo_phos2"/>
    <property type="match status" value="1"/>
</dbReference>
<dbReference type="SMART" id="SM00128">
    <property type="entry name" value="IPPc"/>
    <property type="match status" value="1"/>
</dbReference>
<dbReference type="SUPFAM" id="SSF56219">
    <property type="entry name" value="DNase I-like"/>
    <property type="match status" value="1"/>
</dbReference>
<feature type="chain" id="PRO_0000433259" description="Type IV inositol polyphosphate 5-phosphatase 9">
    <location>
        <begin position="1"/>
        <end position="417"/>
    </location>
</feature>
<feature type="region of interest" description="Catalytic 1" evidence="1">
    <location>
        <begin position="258"/>
        <end position="273"/>
    </location>
</feature>
<feature type="region of interest" description="Catalytic 2" evidence="1">
    <location>
        <begin position="339"/>
        <end position="354"/>
    </location>
</feature>
<comment type="function">
    <text evidence="2">Has phosphatase activity toward PtdIns(4,5)P2 and at a lower extent toward PtdIns(3,4,5)P3 but not toward Ins(1,4,5)P3. Functions in salt stress response by regulating reactive oxygen species (ROS) production, endocytosis, Ca(2+) influx and stress-responsive genes expression.</text>
</comment>
<comment type="catalytic activity">
    <reaction evidence="2">
        <text>a 1,2-diacyl-sn-glycero-3-phospho-(1D-myo-inositol-4,5-bisphosphate) + H2O = a 1,2-diacyl-sn-glycero-3-phospho-(1D-myo-inositol 4-phosphate) + phosphate</text>
        <dbReference type="Rhea" id="RHEA:22764"/>
        <dbReference type="ChEBI" id="CHEBI:15377"/>
        <dbReference type="ChEBI" id="CHEBI:43474"/>
        <dbReference type="ChEBI" id="CHEBI:58178"/>
        <dbReference type="ChEBI" id="CHEBI:58456"/>
        <dbReference type="EC" id="3.1.3.36"/>
    </reaction>
</comment>
<comment type="catalytic activity">
    <reaction evidence="2">
        <text>a 1,2-diacyl-sn-glycero-3-phospho-(1D-myo-inositol-3,4,5-trisphosphate) + H2O = a 1,2-diacyl-sn-glycero-3-phospho-(1D-myo-inositol-3,4-bisphosphate) + phosphate</text>
        <dbReference type="Rhea" id="RHEA:25528"/>
        <dbReference type="ChEBI" id="CHEBI:15377"/>
        <dbReference type="ChEBI" id="CHEBI:43474"/>
        <dbReference type="ChEBI" id="CHEBI:57658"/>
        <dbReference type="ChEBI" id="CHEBI:57836"/>
        <dbReference type="EC" id="3.1.3.86"/>
    </reaction>
</comment>
<comment type="tissue specificity">
    <text evidence="2">Specifically expressed in roots.</text>
</comment>
<comment type="disruption phenotype">
    <text evidence="2">Increased salt sensitivity with reduced production of reactive oxygen species (ROS), reduced Ca(2+) influx, as well as decreased fluid-phase endocytosis.</text>
</comment>
<comment type="similarity">
    <text evidence="4">Belongs to the inositol polyphosphate 5-phosphatase family.</text>
</comment>
<comment type="sequence caution" evidence="4">
    <conflict type="miscellaneous discrepancy">
        <sequence resource="EMBL" id="BX818920"/>
    </conflict>
    <text>Sequencing errors.</text>
</comment>
<reference key="1">
    <citation type="journal article" date="1999" name="Nature">
        <title>Sequence and analysis of chromosome 2 of the plant Arabidopsis thaliana.</title>
        <authorList>
            <person name="Lin X."/>
            <person name="Kaul S."/>
            <person name="Rounsley S.D."/>
            <person name="Shea T.P."/>
            <person name="Benito M.-I."/>
            <person name="Town C.D."/>
            <person name="Fujii C.Y."/>
            <person name="Mason T.M."/>
            <person name="Bowman C.L."/>
            <person name="Barnstead M.E."/>
            <person name="Feldblyum T.V."/>
            <person name="Buell C.R."/>
            <person name="Ketchum K.A."/>
            <person name="Lee J.J."/>
            <person name="Ronning C.M."/>
            <person name="Koo H.L."/>
            <person name="Moffat K.S."/>
            <person name="Cronin L.A."/>
            <person name="Shen M."/>
            <person name="Pai G."/>
            <person name="Van Aken S."/>
            <person name="Umayam L."/>
            <person name="Tallon L.J."/>
            <person name="Gill J.E."/>
            <person name="Adams M.D."/>
            <person name="Carrera A.J."/>
            <person name="Creasy T.H."/>
            <person name="Goodman H.M."/>
            <person name="Somerville C.R."/>
            <person name="Copenhaver G.P."/>
            <person name="Preuss D."/>
            <person name="Nierman W.C."/>
            <person name="White O."/>
            <person name="Eisen J.A."/>
            <person name="Salzberg S.L."/>
            <person name="Fraser C.M."/>
            <person name="Venter J.C."/>
        </authorList>
    </citation>
    <scope>NUCLEOTIDE SEQUENCE [LARGE SCALE GENOMIC DNA]</scope>
    <source>
        <strain>cv. Columbia</strain>
    </source>
</reference>
<reference key="2">
    <citation type="journal article" date="2017" name="Plant J.">
        <title>Araport11: a complete reannotation of the Arabidopsis thaliana reference genome.</title>
        <authorList>
            <person name="Cheng C.Y."/>
            <person name="Krishnakumar V."/>
            <person name="Chan A.P."/>
            <person name="Thibaud-Nissen F."/>
            <person name="Schobel S."/>
            <person name="Town C.D."/>
        </authorList>
    </citation>
    <scope>GENOME REANNOTATION</scope>
    <source>
        <strain>cv. Columbia</strain>
    </source>
</reference>
<reference key="3">
    <citation type="journal article" date="2004" name="Genome Res.">
        <title>Whole genome sequence comparisons and 'full-length' cDNA sequences: a combined approach to evaluate and improve Arabidopsis genome annotation.</title>
        <authorList>
            <person name="Castelli V."/>
            <person name="Aury J.-M."/>
            <person name="Jaillon O."/>
            <person name="Wincker P."/>
            <person name="Clepet C."/>
            <person name="Menard M."/>
            <person name="Cruaud C."/>
            <person name="Quetier F."/>
            <person name="Scarpelli C."/>
            <person name="Schaechter V."/>
            <person name="Temple G."/>
            <person name="Caboche M."/>
            <person name="Weissenbach J."/>
            <person name="Salanoubat M."/>
        </authorList>
    </citation>
    <scope>NUCLEOTIDE SEQUENCE [LARGE SCALE MRNA]</scope>
    <source>
        <strain>cv. Columbia</strain>
    </source>
</reference>
<reference key="4">
    <citation type="journal article" date="2001" name="Plant Physiol.">
        <title>Molecular characterization of At5PTase1, an inositol phosphatase capable of terminating inositol trisphosphate signaling.</title>
        <authorList>
            <person name="Berdy S.E."/>
            <person name="Kudla J."/>
            <person name="Gruissem W."/>
            <person name="Gillaspy G.E."/>
        </authorList>
    </citation>
    <scope>GENE FAMILY</scope>
</reference>
<reference key="5">
    <citation type="journal article" date="2013" name="Mol. Plant">
        <title>Inositol polyphosphate phosphatidylinositol 5-phosphatase9 (At5ptase9) controls plant salt tolerance by regulating endocytosis.</title>
        <authorList>
            <person name="Golani Y."/>
            <person name="Kaye Y."/>
            <person name="Gilhar O."/>
            <person name="Ercetin M."/>
            <person name="Gillaspy G."/>
            <person name="Levine A."/>
        </authorList>
    </citation>
    <scope>DISRUPTION PHENOTYPE</scope>
    <scope>TISSUE SPECIFICITY</scope>
    <scope>CATALYTIC ACTIVITY</scope>
    <scope>FUNCTION</scope>
</reference>
<accession>Q9SIS4</accession>
<name>IP5P9_ARATH</name>
<keyword id="KW-0378">Hydrolase</keyword>
<keyword id="KW-1185">Reference proteome</keyword>
<proteinExistence type="evidence at protein level"/>
<protein>
    <recommendedName>
        <fullName evidence="3">Type IV inositol polyphosphate 5-phosphatase 9</fullName>
        <shortName evidence="3">At5PTase9</shortName>
        <ecNumber evidence="2">3.1.3.36</ecNumber>
        <ecNumber evidence="2">3.1.3.86</ecNumber>
    </recommendedName>
</protein>
<sequence length="417" mass="47924">MWPRLVANKILRKSLGSNNFVADFPPNTDQKLIEASGLADERSKSILHNQHKTTLLNYKVFVSTWNVGGIVPDDGLDMEDLLETHKTPCDIYVLGFQEVVPLRASNVLGSDNNKVSTKWNSLIRDALNKRARPHRDEDLSESKGINGISQDFRCIISKQMVGILITVWVRGDLWPYIRYPSVSCVGCGIMGCLGNKGSVSVRFQLHETTFCFVCSHLASGGRDRDERQRNSDVNEILARSSFPRGSSLDLPKKILDHDRVIFLGDLNYRISLPEEKTRLLVESKKWNILLENDQLRMEIMNGQIFRGWQEGIVKFAPTYKYVPNSDLYYGCITYKKDEKKRAPAWCDRIIWYGNGLKQHEYTRGETKISDHRPVKAIFTTEITVTRRGKKIRNFFFSDRFEERIGDIDSKDYSWIST</sequence>
<gene>
    <name evidence="4" type="primary">IP5P9</name>
    <name evidence="5" type="ordered locus">At2g01900</name>
    <name evidence="6" type="ORF">T23K3.9</name>
</gene>
<organism>
    <name type="scientific">Arabidopsis thaliana</name>
    <name type="common">Mouse-ear cress</name>
    <dbReference type="NCBI Taxonomy" id="3702"/>
    <lineage>
        <taxon>Eukaryota</taxon>
        <taxon>Viridiplantae</taxon>
        <taxon>Streptophyta</taxon>
        <taxon>Embryophyta</taxon>
        <taxon>Tracheophyta</taxon>
        <taxon>Spermatophyta</taxon>
        <taxon>Magnoliopsida</taxon>
        <taxon>eudicotyledons</taxon>
        <taxon>Gunneridae</taxon>
        <taxon>Pentapetalae</taxon>
        <taxon>rosids</taxon>
        <taxon>malvids</taxon>
        <taxon>Brassicales</taxon>
        <taxon>Brassicaceae</taxon>
        <taxon>Camelineae</taxon>
        <taxon>Arabidopsis</taxon>
    </lineage>
</organism>